<reference key="1">
    <citation type="journal article" date="2004" name="Proc. Natl. Acad. Sci. U.S.A.">
        <title>The diploid genome sequence of Candida albicans.</title>
        <authorList>
            <person name="Jones T."/>
            <person name="Federspiel N.A."/>
            <person name="Chibana H."/>
            <person name="Dungan J."/>
            <person name="Kalman S."/>
            <person name="Magee B.B."/>
            <person name="Newport G."/>
            <person name="Thorstenson Y.R."/>
            <person name="Agabian N."/>
            <person name="Magee P.T."/>
            <person name="Davis R.W."/>
            <person name="Scherer S."/>
        </authorList>
    </citation>
    <scope>NUCLEOTIDE SEQUENCE [LARGE SCALE GENOMIC DNA]</scope>
    <source>
        <strain>SC5314 / ATCC MYA-2876</strain>
    </source>
</reference>
<reference key="2">
    <citation type="journal article" date="2007" name="Genome Biol.">
        <title>Assembly of the Candida albicans genome into sixteen supercontigs aligned on the eight chromosomes.</title>
        <authorList>
            <person name="van het Hoog M."/>
            <person name="Rast T.J."/>
            <person name="Martchenko M."/>
            <person name="Grindle S."/>
            <person name="Dignard D."/>
            <person name="Hogues H."/>
            <person name="Cuomo C."/>
            <person name="Berriman M."/>
            <person name="Scherer S."/>
            <person name="Magee B.B."/>
            <person name="Whiteway M."/>
            <person name="Chibana H."/>
            <person name="Nantel A."/>
            <person name="Magee P.T."/>
        </authorList>
    </citation>
    <scope>GENOME REANNOTATION</scope>
    <source>
        <strain>SC5314 / ATCC MYA-2876</strain>
    </source>
</reference>
<reference key="3">
    <citation type="journal article" date="2013" name="Genome Biol.">
        <title>Assembly of a phased diploid Candida albicans genome facilitates allele-specific measurements and provides a simple model for repeat and indel structure.</title>
        <authorList>
            <person name="Muzzey D."/>
            <person name="Schwartz K."/>
            <person name="Weissman J.S."/>
            <person name="Sherlock G."/>
        </authorList>
    </citation>
    <scope>NUCLEOTIDE SEQUENCE [LARGE SCALE GENOMIC DNA]</scope>
    <scope>GENOME REANNOTATION</scope>
    <source>
        <strain>SC5314 / ATCC MYA-2876</strain>
    </source>
</reference>
<reference key="4">
    <citation type="journal article" date="2012" name="Eukaryot. Cell">
        <title>Neddylation and CAND1 independently stimulate SCF ubiquitin ligase activity in Candida albicans.</title>
        <authorList>
            <person name="Sela N."/>
            <person name="Atir-Lande A."/>
            <person name="Kornitzer D."/>
        </authorList>
    </citation>
    <scope>FUNCTION</scope>
    <scope>DISRUPTION PHENOTYPE</scope>
</reference>
<proteinExistence type="inferred from homology"/>
<comment type="function">
    <text evidence="4">Key assembly factor of SCF (SKP1-CUL1-F-box protein) E3 ubiquitin ligase complexes that promotes the exchange of the substrate-recognition F-box subunit in SCF complexes, thereby playing a key role in the cellular repertoire of SCF complexes. Acts as a F-box protein exchange factor (Probable).</text>
</comment>
<comment type="disruption phenotype">
    <text evidence="2">No visible phenotype. Cells lacking both RUB1 and CAND1 show defects in morphological, growth and protein degradation, consistent with a reduction in SCF ubiquitin ligase activity.</text>
</comment>
<comment type="similarity">
    <text evidence="3">Belongs to the CAND family.</text>
</comment>
<organism>
    <name type="scientific">Candida albicans (strain SC5314 / ATCC MYA-2876)</name>
    <name type="common">Yeast</name>
    <dbReference type="NCBI Taxonomy" id="237561"/>
    <lineage>
        <taxon>Eukaryota</taxon>
        <taxon>Fungi</taxon>
        <taxon>Dikarya</taxon>
        <taxon>Ascomycota</taxon>
        <taxon>Saccharomycotina</taxon>
        <taxon>Pichiomycetes</taxon>
        <taxon>Debaryomycetaceae</taxon>
        <taxon>Candida/Lodderomyces clade</taxon>
        <taxon>Candida</taxon>
    </lineage>
</organism>
<accession>Q5ADW3</accession>
<accession>A0A1D8PKT2</accession>
<sequence length="1195" mass="134467">MHDINFNILKDRAMDVDPDIRFMALEDLRKFLQDESAASTRTTLNQSLENFFPILLNMLNDQNPDVQTQAIKSFEPMVKYLSNETFSKLVKKLFALVQQNSSSTGNVTGMKSFTVSVPNIALRSLFAQSNSRDKSEFVSDKLSNSNYRFDPHLARYIMDYLIPQIVGNPVTIDSIELLIDLVTEIGYVLTQDELLNLSLYLTKVALTETGLIGKKSMVALERVVALVRTEVVIDKLLAQINQSIEPTKLFVIFQLYSVCLKRGIKPNSIDTIYNTITSNLNIEATEEEDDDDLDFDNLVKENSLKDEALTTLIDLVSQHFLPVESKNTVIALIKSYVNYNPLAQDEDFIDDEEDDISFSDDEQEDDGDGENDGSWKLRAKATILTRALLKSFPDTLELLSKEVLPVFSFADSNDQVVSEVIKSSIAIVNSTSPRDSTNVSELFPIIAARMKLAKETQVPLFLKLVESLNRFDNTSLVLEVFKIIKDRKLITSGSFDYLQFYSSTLKFHDNLPPLVIERMSSDFIKNLDDKSFNMITDSIKCLSLLFHQDSLEKLDAIVDLLIYKVENSKQYPSDLVRQSIIALGEAYGRADKQKILNVFKHSIEYEGTSKTTIDVLTQIYSTDIPSEYSYLILKKLSTSIMSSTEATSVASLLLMNKIFERLPSGDYDDTAGNLVQLLAVTNKANYECIFHILIKLVGTVLQETHRAPLLQTIVKLVNEGKIEVADNSFFQFITTACNQIPDLYNFFEDGLNLNSELSAKILAICASQNKLENKIMERREEFQNYYNSNINDSRLAFDILFLGYVGTHIEVKELDVQTLIGLLSNSQLTNDDNISAASTALGLIAQKHIDSAVPIILNAYESSEKTIIRGSLVDSLSIAADACNEDQKRVIWDKVFNFPVEFDHEVITELKKSGELLGKIPVVDELTINTDNLKTTYLILVITKSLLNNLQATKVNNTLLDSLIKSSIEWLNIVNIDIRQIVVGNLLTGLHSKPDTILPILDSIILPKIFDQLQAEDSFKKIITMGPYKYVLDEGLEIRKLCYEFIYSVISLENAVIKKYNINLEKIASKIIEVGLIDTQTDITVLACINLTNYIELHKDSAVELITRDGGNAFTTMINNLKKQLSKKLSAKASTQDSESHQERIKSIIKLSKKFASVVEAAESIELAAAIRVWNEYNNDLKTNFTIYYNSTDGV</sequence>
<name>CAND1_CANAL</name>
<protein>
    <recommendedName>
        <fullName>Cullin-associated NEDD8-dissociated protein 1</fullName>
    </recommendedName>
    <alternativeName>
        <fullName>CaTIP120</fullName>
    </alternativeName>
    <alternativeName>
        <fullName>Cullin-associated and neddylation-dissociated protein 1</fullName>
        <shortName>TBP-interacting protein 120 homolog</shortName>
    </alternativeName>
</protein>
<dbReference type="EMBL" id="CP017625">
    <property type="protein sequence ID" value="AOW28760.1"/>
    <property type="molecule type" value="Genomic_DNA"/>
</dbReference>
<dbReference type="RefSeq" id="XP_719828.2">
    <property type="nucleotide sequence ID" value="XM_714735.2"/>
</dbReference>
<dbReference type="SMR" id="Q5ADW3"/>
<dbReference type="STRING" id="237561.Q5ADW3"/>
<dbReference type="EnsemblFungi" id="C3_07610W_A-T">
    <property type="protein sequence ID" value="C3_07610W_A-T-p1"/>
    <property type="gene ID" value="C3_07610W_A"/>
</dbReference>
<dbReference type="GeneID" id="3638494"/>
<dbReference type="KEGG" id="cal:CAALFM_C307610WA"/>
<dbReference type="CGD" id="CAL0000174904">
    <property type="gene designation" value="TIP120"/>
</dbReference>
<dbReference type="VEuPathDB" id="FungiDB:C3_07610W_A"/>
<dbReference type="eggNOG" id="KOG1824">
    <property type="taxonomic scope" value="Eukaryota"/>
</dbReference>
<dbReference type="HOGENOM" id="CLU_265739_0_0_1"/>
<dbReference type="InParanoid" id="Q5ADW3"/>
<dbReference type="OrthoDB" id="6260732at2759"/>
<dbReference type="PRO" id="PR:Q5ADW3"/>
<dbReference type="Proteomes" id="UP000000559">
    <property type="component" value="Chromosome 3"/>
</dbReference>
<dbReference type="GO" id="GO:0005634">
    <property type="term" value="C:nucleus"/>
    <property type="evidence" value="ECO:0000318"/>
    <property type="project" value="GO_Central"/>
</dbReference>
<dbReference type="GO" id="GO:0019005">
    <property type="term" value="C:SCF ubiquitin ligase complex"/>
    <property type="evidence" value="ECO:0000315"/>
    <property type="project" value="CGD"/>
</dbReference>
<dbReference type="GO" id="GO:0016567">
    <property type="term" value="P:protein ubiquitination"/>
    <property type="evidence" value="ECO:0000318"/>
    <property type="project" value="GO_Central"/>
</dbReference>
<dbReference type="GO" id="GO:0010265">
    <property type="term" value="P:SCF complex assembly"/>
    <property type="evidence" value="ECO:0000318"/>
    <property type="project" value="GO_Central"/>
</dbReference>
<dbReference type="GO" id="GO:0031146">
    <property type="term" value="P:SCF-dependent proteasomal ubiquitin-dependent protein catabolic process"/>
    <property type="evidence" value="ECO:0000315"/>
    <property type="project" value="CGD"/>
</dbReference>
<dbReference type="Gene3D" id="1.25.10.10">
    <property type="entry name" value="Leucine-rich Repeat Variant"/>
    <property type="match status" value="1"/>
</dbReference>
<dbReference type="InterPro" id="IPR011989">
    <property type="entry name" value="ARM-like"/>
</dbReference>
<dbReference type="InterPro" id="IPR016024">
    <property type="entry name" value="ARM-type_fold"/>
</dbReference>
<dbReference type="InterPro" id="IPR039852">
    <property type="entry name" value="CAND1/CAND2"/>
</dbReference>
<dbReference type="InterPro" id="IPR000357">
    <property type="entry name" value="HEAT"/>
</dbReference>
<dbReference type="InterPro" id="IPR021133">
    <property type="entry name" value="HEAT_type_2"/>
</dbReference>
<dbReference type="InterPro" id="IPR013932">
    <property type="entry name" value="TATA-bd_TIP120"/>
</dbReference>
<dbReference type="PANTHER" id="PTHR12696">
    <property type="entry name" value="TIP120"/>
    <property type="match status" value="1"/>
</dbReference>
<dbReference type="Pfam" id="PF02985">
    <property type="entry name" value="HEAT"/>
    <property type="match status" value="1"/>
</dbReference>
<dbReference type="Pfam" id="PF08623">
    <property type="entry name" value="TIP120"/>
    <property type="match status" value="1"/>
</dbReference>
<dbReference type="SUPFAM" id="SSF48371">
    <property type="entry name" value="ARM repeat"/>
    <property type="match status" value="1"/>
</dbReference>
<dbReference type="PROSITE" id="PS50077">
    <property type="entry name" value="HEAT_REPEAT"/>
    <property type="match status" value="1"/>
</dbReference>
<keyword id="KW-1185">Reference proteome</keyword>
<keyword id="KW-0677">Repeat</keyword>
<keyword id="KW-0833">Ubl conjugation pathway</keyword>
<evidence type="ECO:0000255" key="1"/>
<evidence type="ECO:0000269" key="2">
    <source>
    </source>
</evidence>
<evidence type="ECO:0000305" key="3"/>
<evidence type="ECO:0000305" key="4">
    <source>
    </source>
</evidence>
<gene>
    <name type="primary">TIP120</name>
    <name type="ordered locus">CAALFM_C307610WA</name>
    <name type="ORF">CaO19.14021</name>
    <name type="ORF">CaO19.6729</name>
</gene>
<feature type="chain" id="PRO_0000422242" description="Cullin-associated NEDD8-dissociated protein 1">
    <location>
        <begin position="1"/>
        <end position="1195"/>
    </location>
</feature>
<feature type="repeat" description="HEAT 1" evidence="1">
    <location>
        <begin position="1"/>
        <end position="37"/>
    </location>
</feature>
<feature type="repeat" description="HEAT 2" evidence="1">
    <location>
        <begin position="45"/>
        <end position="83"/>
    </location>
</feature>
<feature type="repeat" description="HEAT 3" evidence="1">
    <location>
        <begin position="168"/>
        <end position="206"/>
    </location>
</feature>
<feature type="repeat" description="HEAT 4" evidence="1">
    <location>
        <begin position="397"/>
        <end position="434"/>
    </location>
</feature>
<feature type="repeat" description="HEAT 5" evidence="1">
    <location>
        <begin position="436"/>
        <end position="474"/>
    </location>
</feature>
<feature type="repeat" description="HEAT 6" evidence="1">
    <location>
        <begin position="703"/>
        <end position="742"/>
    </location>
</feature>
<feature type="repeat" description="HEAT 7" evidence="1">
    <location>
        <begin position="846"/>
        <end position="885"/>
    </location>
</feature>
<feature type="repeat" description="HEAT 8" evidence="1">
    <location>
        <begin position="999"/>
        <end position="1037"/>
    </location>
</feature>